<protein>
    <recommendedName>
        <fullName evidence="1">Protein-export protein SecB</fullName>
    </recommendedName>
</protein>
<comment type="function">
    <text evidence="1">One of the proteins required for the normal export of preproteins out of the cell cytoplasm. It is a molecular chaperone that binds to a subset of precursor proteins, maintaining them in a translocation-competent state. It also specifically binds to its receptor SecA.</text>
</comment>
<comment type="subunit">
    <text evidence="1">Homotetramer, a dimer of dimers. One homotetramer interacts with 1 SecA dimer.</text>
</comment>
<comment type="subcellular location">
    <subcellularLocation>
        <location evidence="1">Cytoplasm</location>
    </subcellularLocation>
</comment>
<comment type="similarity">
    <text evidence="1">Belongs to the SecB family.</text>
</comment>
<reference key="1">
    <citation type="submission" date="2007-11" db="EMBL/GenBank/DDBJ databases">
        <title>Genome sequencing of phylogenetically and phenotypically diverse Coxiella burnetii isolates.</title>
        <authorList>
            <person name="Seshadri R."/>
            <person name="Samuel J.E."/>
        </authorList>
    </citation>
    <scope>NUCLEOTIDE SEQUENCE [LARGE SCALE GENOMIC DNA]</scope>
    <source>
        <strain>RSA 331 / Henzerling II</strain>
    </source>
</reference>
<keyword id="KW-0143">Chaperone</keyword>
<keyword id="KW-0963">Cytoplasm</keyword>
<keyword id="KW-0653">Protein transport</keyword>
<keyword id="KW-0811">Translocation</keyword>
<keyword id="KW-0813">Transport</keyword>
<proteinExistence type="inferred from homology"/>
<name>SECB_COXBR</name>
<dbReference type="EMBL" id="CP000890">
    <property type="protein sequence ID" value="ABX77695.1"/>
    <property type="molecule type" value="Genomic_DNA"/>
</dbReference>
<dbReference type="RefSeq" id="WP_005772050.1">
    <property type="nucleotide sequence ID" value="NC_010117.1"/>
</dbReference>
<dbReference type="SMR" id="A9N957"/>
<dbReference type="KEGG" id="cbs:COXBURSA331_A1702"/>
<dbReference type="HOGENOM" id="CLU_111574_1_0_6"/>
<dbReference type="GO" id="GO:0005737">
    <property type="term" value="C:cytoplasm"/>
    <property type="evidence" value="ECO:0007669"/>
    <property type="project" value="UniProtKB-SubCell"/>
</dbReference>
<dbReference type="GO" id="GO:0051082">
    <property type="term" value="F:unfolded protein binding"/>
    <property type="evidence" value="ECO:0007669"/>
    <property type="project" value="InterPro"/>
</dbReference>
<dbReference type="GO" id="GO:0006457">
    <property type="term" value="P:protein folding"/>
    <property type="evidence" value="ECO:0007669"/>
    <property type="project" value="UniProtKB-UniRule"/>
</dbReference>
<dbReference type="GO" id="GO:0051262">
    <property type="term" value="P:protein tetramerization"/>
    <property type="evidence" value="ECO:0007669"/>
    <property type="project" value="InterPro"/>
</dbReference>
<dbReference type="GO" id="GO:0015031">
    <property type="term" value="P:protein transport"/>
    <property type="evidence" value="ECO:0007669"/>
    <property type="project" value="UniProtKB-UniRule"/>
</dbReference>
<dbReference type="Gene3D" id="3.10.420.10">
    <property type="entry name" value="SecB-like"/>
    <property type="match status" value="1"/>
</dbReference>
<dbReference type="HAMAP" id="MF_00821">
    <property type="entry name" value="SecB"/>
    <property type="match status" value="1"/>
</dbReference>
<dbReference type="InterPro" id="IPR003708">
    <property type="entry name" value="SecB"/>
</dbReference>
<dbReference type="InterPro" id="IPR035958">
    <property type="entry name" value="SecB-like_sf"/>
</dbReference>
<dbReference type="NCBIfam" id="NF004393">
    <property type="entry name" value="PRK05751.1-4"/>
    <property type="match status" value="1"/>
</dbReference>
<dbReference type="NCBIfam" id="TIGR00809">
    <property type="entry name" value="secB"/>
    <property type="match status" value="1"/>
</dbReference>
<dbReference type="PANTHER" id="PTHR36918">
    <property type="match status" value="1"/>
</dbReference>
<dbReference type="PANTHER" id="PTHR36918:SF1">
    <property type="entry name" value="PROTEIN-EXPORT PROTEIN SECB"/>
    <property type="match status" value="1"/>
</dbReference>
<dbReference type="Pfam" id="PF02556">
    <property type="entry name" value="SecB"/>
    <property type="match status" value="1"/>
</dbReference>
<dbReference type="PRINTS" id="PR01594">
    <property type="entry name" value="SECBCHAPRONE"/>
</dbReference>
<dbReference type="SUPFAM" id="SSF54611">
    <property type="entry name" value="SecB-like"/>
    <property type="match status" value="1"/>
</dbReference>
<organism>
    <name type="scientific">Coxiella burnetii (strain RSA 331 / Henzerling II)</name>
    <dbReference type="NCBI Taxonomy" id="360115"/>
    <lineage>
        <taxon>Bacteria</taxon>
        <taxon>Pseudomonadati</taxon>
        <taxon>Pseudomonadota</taxon>
        <taxon>Gammaproteobacteria</taxon>
        <taxon>Legionellales</taxon>
        <taxon>Coxiellaceae</taxon>
        <taxon>Coxiella</taxon>
    </lineage>
</organism>
<evidence type="ECO:0000255" key="1">
    <source>
        <dbReference type="HAMAP-Rule" id="MF_00821"/>
    </source>
</evidence>
<accession>A9N957</accession>
<feature type="chain" id="PRO_1000083855" description="Protein-export protein SecB">
    <location>
        <begin position="1"/>
        <end position="161"/>
    </location>
</feature>
<gene>
    <name evidence="1" type="primary">secB</name>
    <name type="ordered locus">COXBURSA331_A1702</name>
</gene>
<sequence length="161" mass="18377">MAEQNQRTNTPDNGPEFAIQRLYIKDLSFEAPRSPQVFLEEWQPELNMDLATKVNDLGEDNHEVVLTVTVTVTMKESHIFLAEVQQGGIFTIKNFPKEEMRPMLGSFCPNILYPYAREAITDMVVRGGFPQLYLAPVNFDALFEQHEQSEEGNSGTEDRVH</sequence>